<accession>A0T0V9</accession>
<feature type="chain" id="PRO_0000276530" description="Large ribosomal subunit protein bL34c">
    <location>
        <begin position="1"/>
        <end position="48"/>
    </location>
</feature>
<geneLocation type="chloroplast"/>
<gene>
    <name evidence="1" type="primary">rpl34</name>
</gene>
<sequence length="48" mass="5555">MTKRTLSNKTRSSILKVSGFRARMATAQGRKIIRTRRQKGRKKLAIPR</sequence>
<dbReference type="EMBL" id="EF067921">
    <property type="protein sequence ID" value="ABK20794.1"/>
    <property type="molecule type" value="Genomic_DNA"/>
</dbReference>
<dbReference type="EMBL" id="EF067921">
    <property type="protein sequence ID" value="ABK20846.1"/>
    <property type="molecule type" value="Genomic_DNA"/>
</dbReference>
<dbReference type="RefSeq" id="YP_874571.1">
    <property type="nucleotide sequence ID" value="NC_008589.1"/>
</dbReference>
<dbReference type="RefSeq" id="YP_874623.1">
    <property type="nucleotide sequence ID" value="NC_008589.1"/>
</dbReference>
<dbReference type="SMR" id="A0T0V9"/>
<dbReference type="GeneID" id="4524825"/>
<dbReference type="GeneID" id="4524888"/>
<dbReference type="InParanoid" id="A0T0V9"/>
<dbReference type="GO" id="GO:0009507">
    <property type="term" value="C:chloroplast"/>
    <property type="evidence" value="ECO:0007669"/>
    <property type="project" value="UniProtKB-SubCell"/>
</dbReference>
<dbReference type="GO" id="GO:0005762">
    <property type="term" value="C:mitochondrial large ribosomal subunit"/>
    <property type="evidence" value="ECO:0000318"/>
    <property type="project" value="GO_Central"/>
</dbReference>
<dbReference type="GO" id="GO:0003735">
    <property type="term" value="F:structural constituent of ribosome"/>
    <property type="evidence" value="ECO:0007669"/>
    <property type="project" value="InterPro"/>
</dbReference>
<dbReference type="GO" id="GO:0006412">
    <property type="term" value="P:translation"/>
    <property type="evidence" value="ECO:0007669"/>
    <property type="project" value="UniProtKB-UniRule"/>
</dbReference>
<dbReference type="Gene3D" id="1.10.287.3980">
    <property type="match status" value="1"/>
</dbReference>
<dbReference type="HAMAP" id="MF_00391">
    <property type="entry name" value="Ribosomal_bL34"/>
    <property type="match status" value="1"/>
</dbReference>
<dbReference type="InterPro" id="IPR000271">
    <property type="entry name" value="Ribosomal_bL34"/>
</dbReference>
<dbReference type="InterPro" id="IPR020939">
    <property type="entry name" value="Ribosomal_bL34_CS"/>
</dbReference>
<dbReference type="NCBIfam" id="TIGR01030">
    <property type="entry name" value="rpmH_bact"/>
    <property type="match status" value="1"/>
</dbReference>
<dbReference type="Pfam" id="PF00468">
    <property type="entry name" value="Ribosomal_L34"/>
    <property type="match status" value="1"/>
</dbReference>
<dbReference type="PROSITE" id="PS00784">
    <property type="entry name" value="RIBOSOMAL_L34"/>
    <property type="match status" value="1"/>
</dbReference>
<organism>
    <name type="scientific">Thalassiosira pseudonana</name>
    <name type="common">Marine diatom</name>
    <name type="synonym">Cyclotella nana</name>
    <dbReference type="NCBI Taxonomy" id="35128"/>
    <lineage>
        <taxon>Eukaryota</taxon>
        <taxon>Sar</taxon>
        <taxon>Stramenopiles</taxon>
        <taxon>Ochrophyta</taxon>
        <taxon>Bacillariophyta</taxon>
        <taxon>Coscinodiscophyceae</taxon>
        <taxon>Thalassiosirophycidae</taxon>
        <taxon>Thalassiosirales</taxon>
        <taxon>Thalassiosiraceae</taxon>
        <taxon>Thalassiosira</taxon>
    </lineage>
</organism>
<name>RK34_THAPS</name>
<protein>
    <recommendedName>
        <fullName evidence="1">Large ribosomal subunit protein bL34c</fullName>
    </recommendedName>
    <alternativeName>
        <fullName evidence="2">50S ribosomal protein L34, chloroplastic</fullName>
    </alternativeName>
</protein>
<keyword id="KW-0150">Chloroplast</keyword>
<keyword id="KW-0934">Plastid</keyword>
<keyword id="KW-0687">Ribonucleoprotein</keyword>
<keyword id="KW-0689">Ribosomal protein</keyword>
<reference key="1">
    <citation type="journal article" date="2007" name="Mol. Genet. Genomics">
        <title>Chloroplast genomes of the diatoms Phaeodactylum tricornutum and Thalassiosira pseudonana: comparison with other plastid genomes of the red lineage.</title>
        <authorList>
            <person name="Oudot-Le Secq M.-P."/>
            <person name="Grimwood J."/>
            <person name="Shapiro H."/>
            <person name="Armbrust E.V."/>
            <person name="Bowler C."/>
            <person name="Green B.R."/>
        </authorList>
    </citation>
    <scope>NUCLEOTIDE SEQUENCE [LARGE SCALE GENOMIC DNA]</scope>
    <source>
        <strain>CCMP1335 / NEPCC58 / CCAP 1085/12</strain>
    </source>
</reference>
<proteinExistence type="inferred from homology"/>
<comment type="subcellular location">
    <subcellularLocation>
        <location>Plastid</location>
        <location>Chloroplast</location>
    </subcellularLocation>
</comment>
<comment type="similarity">
    <text evidence="1">Belongs to the bacterial ribosomal protein bL34 family.</text>
</comment>
<evidence type="ECO:0000255" key="1">
    <source>
        <dbReference type="HAMAP-Rule" id="MF_00391"/>
    </source>
</evidence>
<evidence type="ECO:0000305" key="2"/>